<protein>
    <recommendedName>
        <fullName evidence="3">Large ribosomal subunit protein eL15</fullName>
    </recommendedName>
    <alternativeName>
        <fullName>60S ribosomal protein L15</fullName>
    </alternativeName>
</protein>
<accession>Q7T3N1</accession>
<organism>
    <name type="scientific">Mylopharyngodon piceus</name>
    <name type="common">Black carp</name>
    <name type="synonym">Leuciscus piceus</name>
    <dbReference type="NCBI Taxonomy" id="75356"/>
    <lineage>
        <taxon>Eukaryota</taxon>
        <taxon>Metazoa</taxon>
        <taxon>Chordata</taxon>
        <taxon>Craniata</taxon>
        <taxon>Vertebrata</taxon>
        <taxon>Euteleostomi</taxon>
        <taxon>Actinopterygii</taxon>
        <taxon>Neopterygii</taxon>
        <taxon>Teleostei</taxon>
        <taxon>Ostariophysi</taxon>
        <taxon>Cypriniformes</taxon>
        <taxon>Xenocyprididae</taxon>
        <taxon>Xenocypridinae</taxon>
        <taxon>Mylopharyngodon</taxon>
    </lineage>
</organism>
<feature type="initiator methionine" description="Removed" evidence="1">
    <location>
        <position position="1"/>
    </location>
</feature>
<feature type="chain" id="PRO_0000127543" description="Large ribosomal subunit protein eL15">
    <location>
        <begin position="2"/>
        <end position="204"/>
    </location>
</feature>
<sequence length="204" mass="24065">MGAYKYMQELWRKKQSDVMRFLLRVRCWQYRQLSSLHRAPRPTRPDKARRLGYKAKQGYVIYRIRVRRGGRKRPVPKGATYGKPVHHGVNQIKFARSLQSVAEERAGRHCGGLRVLNSYWVGEDSTYKFFEVILIDTFHKAIRRNPDTQWITKAVHKHREMRGLTSAGKKSRGLGKGHKFHLTIGGSRRAAWKRRDTLQLHRYR</sequence>
<gene>
    <name type="primary">rpl15</name>
</gene>
<evidence type="ECO:0000250" key="1"/>
<evidence type="ECO:0000250" key="2">
    <source>
        <dbReference type="UniProtKB" id="P61313"/>
    </source>
</evidence>
<evidence type="ECO:0000305" key="3"/>
<reference key="1">
    <citation type="submission" date="2003-03" db="EMBL/GenBank/DDBJ databases">
        <title>Evaluating the potential of ribosomal protein L15 as a novel marker for phylogenetic analysis: a comparative analysis of 15 teleost RPL15 cDNAs.</title>
        <authorList>
            <person name="Song P."/>
            <person name="Zhang J."/>
            <person name="Xiang Z."/>
        </authorList>
    </citation>
    <scope>NUCLEOTIDE SEQUENCE [MRNA]</scope>
    <source>
        <tissue>Liver</tissue>
    </source>
</reference>
<proteinExistence type="evidence at transcript level"/>
<keyword id="KW-0963">Cytoplasm</keyword>
<keyword id="KW-0687">Ribonucleoprotein</keyword>
<keyword id="KW-0689">Ribosomal protein</keyword>
<name>RL15_MYLPI</name>
<comment type="function">
    <text evidence="2">Component of the large ribosomal subunit. The ribosome is a large ribonucleoprotein complex responsible for the synthesis of proteins in the cell.</text>
</comment>
<comment type="subunit">
    <text evidence="2">Component of the large ribosomal subunit.</text>
</comment>
<comment type="subcellular location">
    <subcellularLocation>
        <location evidence="2">Cytoplasm</location>
    </subcellularLocation>
</comment>
<comment type="similarity">
    <text evidence="3">Belongs to the eukaryotic ribosomal protein eL15 family.</text>
</comment>
<dbReference type="EMBL" id="AY249421">
    <property type="protein sequence ID" value="AAP35258.1"/>
    <property type="molecule type" value="mRNA"/>
</dbReference>
<dbReference type="SMR" id="Q7T3N1"/>
<dbReference type="GO" id="GO:0022625">
    <property type="term" value="C:cytosolic large ribosomal subunit"/>
    <property type="evidence" value="ECO:0007669"/>
    <property type="project" value="TreeGrafter"/>
</dbReference>
<dbReference type="GO" id="GO:0003723">
    <property type="term" value="F:RNA binding"/>
    <property type="evidence" value="ECO:0007669"/>
    <property type="project" value="TreeGrafter"/>
</dbReference>
<dbReference type="GO" id="GO:0003735">
    <property type="term" value="F:structural constituent of ribosome"/>
    <property type="evidence" value="ECO:0007669"/>
    <property type="project" value="InterPro"/>
</dbReference>
<dbReference type="GO" id="GO:0002181">
    <property type="term" value="P:cytoplasmic translation"/>
    <property type="evidence" value="ECO:0007669"/>
    <property type="project" value="TreeGrafter"/>
</dbReference>
<dbReference type="FunFam" id="3.40.1120.10:FF:000001">
    <property type="entry name" value="Ribosomal protein L15"/>
    <property type="match status" value="1"/>
</dbReference>
<dbReference type="Gene3D" id="3.40.1120.10">
    <property type="entry name" value="Ribosomal protein l15e"/>
    <property type="match status" value="1"/>
</dbReference>
<dbReference type="InterPro" id="IPR024794">
    <property type="entry name" value="Rbsml_eL15_core_dom_sf"/>
</dbReference>
<dbReference type="InterPro" id="IPR000439">
    <property type="entry name" value="Ribosomal_eL15"/>
</dbReference>
<dbReference type="InterPro" id="IPR020925">
    <property type="entry name" value="Ribosomal_eL15_CS"/>
</dbReference>
<dbReference type="InterPro" id="IPR012678">
    <property type="entry name" value="Ribosomal_uL23/eL15/eS24_sf"/>
</dbReference>
<dbReference type="NCBIfam" id="NF003269">
    <property type="entry name" value="PRK04243.1"/>
    <property type="match status" value="1"/>
</dbReference>
<dbReference type="PANTHER" id="PTHR11847:SF4">
    <property type="entry name" value="LARGE RIBOSOMAL SUBUNIT PROTEIN EL15"/>
    <property type="match status" value="1"/>
</dbReference>
<dbReference type="PANTHER" id="PTHR11847">
    <property type="entry name" value="RIBOSOMAL PROTEIN L15"/>
    <property type="match status" value="1"/>
</dbReference>
<dbReference type="Pfam" id="PF00827">
    <property type="entry name" value="Ribosomal_L15e"/>
    <property type="match status" value="1"/>
</dbReference>
<dbReference type="SMART" id="SM01384">
    <property type="entry name" value="Ribosomal_L15e"/>
    <property type="match status" value="1"/>
</dbReference>
<dbReference type="SUPFAM" id="SSF54189">
    <property type="entry name" value="Ribosomal proteins S24e, L23 and L15e"/>
    <property type="match status" value="1"/>
</dbReference>
<dbReference type="PROSITE" id="PS01194">
    <property type="entry name" value="RIBOSOMAL_L15E"/>
    <property type="match status" value="1"/>
</dbReference>